<dbReference type="EMBL" id="CP000726">
    <property type="protein sequence ID" value="ABS34911.1"/>
    <property type="molecule type" value="Genomic_DNA"/>
</dbReference>
<dbReference type="SMR" id="A7FZ45"/>
<dbReference type="KEGG" id="cba:CLB_3509"/>
<dbReference type="HOGENOM" id="CLU_092403_0_2_9"/>
<dbReference type="GO" id="GO:0015935">
    <property type="term" value="C:small ribosomal subunit"/>
    <property type="evidence" value="ECO:0007669"/>
    <property type="project" value="InterPro"/>
</dbReference>
<dbReference type="GO" id="GO:0019843">
    <property type="term" value="F:rRNA binding"/>
    <property type="evidence" value="ECO:0007669"/>
    <property type="project" value="UniProtKB-UniRule"/>
</dbReference>
<dbReference type="GO" id="GO:0003735">
    <property type="term" value="F:structural constituent of ribosome"/>
    <property type="evidence" value="ECO:0007669"/>
    <property type="project" value="InterPro"/>
</dbReference>
<dbReference type="GO" id="GO:0042274">
    <property type="term" value="P:ribosomal small subunit biogenesis"/>
    <property type="evidence" value="ECO:0007669"/>
    <property type="project" value="TreeGrafter"/>
</dbReference>
<dbReference type="GO" id="GO:0006412">
    <property type="term" value="P:translation"/>
    <property type="evidence" value="ECO:0007669"/>
    <property type="project" value="UniProtKB-UniRule"/>
</dbReference>
<dbReference type="CDD" id="cd00165">
    <property type="entry name" value="S4"/>
    <property type="match status" value="1"/>
</dbReference>
<dbReference type="FunFam" id="1.10.1050.10:FF:000001">
    <property type="entry name" value="30S ribosomal protein S4"/>
    <property type="match status" value="1"/>
</dbReference>
<dbReference type="FunFam" id="3.10.290.10:FF:000001">
    <property type="entry name" value="30S ribosomal protein S4"/>
    <property type="match status" value="1"/>
</dbReference>
<dbReference type="Gene3D" id="1.10.1050.10">
    <property type="entry name" value="Ribosomal Protein S4 Delta 41, Chain A, domain 1"/>
    <property type="match status" value="1"/>
</dbReference>
<dbReference type="Gene3D" id="3.10.290.10">
    <property type="entry name" value="RNA-binding S4 domain"/>
    <property type="match status" value="1"/>
</dbReference>
<dbReference type="HAMAP" id="MF_01306_B">
    <property type="entry name" value="Ribosomal_uS4_B"/>
    <property type="match status" value="1"/>
</dbReference>
<dbReference type="InterPro" id="IPR022801">
    <property type="entry name" value="Ribosomal_uS4"/>
</dbReference>
<dbReference type="InterPro" id="IPR005709">
    <property type="entry name" value="Ribosomal_uS4_bac-type"/>
</dbReference>
<dbReference type="InterPro" id="IPR018079">
    <property type="entry name" value="Ribosomal_uS4_CS"/>
</dbReference>
<dbReference type="InterPro" id="IPR001912">
    <property type="entry name" value="Ribosomal_uS4_N"/>
</dbReference>
<dbReference type="InterPro" id="IPR002942">
    <property type="entry name" value="S4_RNA-bd"/>
</dbReference>
<dbReference type="InterPro" id="IPR036986">
    <property type="entry name" value="S4_RNA-bd_sf"/>
</dbReference>
<dbReference type="NCBIfam" id="NF003717">
    <property type="entry name" value="PRK05327.1"/>
    <property type="match status" value="1"/>
</dbReference>
<dbReference type="NCBIfam" id="TIGR01017">
    <property type="entry name" value="rpsD_bact"/>
    <property type="match status" value="1"/>
</dbReference>
<dbReference type="PANTHER" id="PTHR11831">
    <property type="entry name" value="30S 40S RIBOSOMAL PROTEIN"/>
    <property type="match status" value="1"/>
</dbReference>
<dbReference type="PANTHER" id="PTHR11831:SF4">
    <property type="entry name" value="SMALL RIBOSOMAL SUBUNIT PROTEIN US4M"/>
    <property type="match status" value="1"/>
</dbReference>
<dbReference type="Pfam" id="PF00163">
    <property type="entry name" value="Ribosomal_S4"/>
    <property type="match status" value="1"/>
</dbReference>
<dbReference type="Pfam" id="PF01479">
    <property type="entry name" value="S4"/>
    <property type="match status" value="1"/>
</dbReference>
<dbReference type="SMART" id="SM01390">
    <property type="entry name" value="Ribosomal_S4"/>
    <property type="match status" value="1"/>
</dbReference>
<dbReference type="SMART" id="SM00363">
    <property type="entry name" value="S4"/>
    <property type="match status" value="1"/>
</dbReference>
<dbReference type="SUPFAM" id="SSF55174">
    <property type="entry name" value="Alpha-L RNA-binding motif"/>
    <property type="match status" value="1"/>
</dbReference>
<dbReference type="PROSITE" id="PS00632">
    <property type="entry name" value="RIBOSOMAL_S4"/>
    <property type="match status" value="1"/>
</dbReference>
<dbReference type="PROSITE" id="PS50889">
    <property type="entry name" value="S4"/>
    <property type="match status" value="1"/>
</dbReference>
<comment type="function">
    <text evidence="1">One of the primary rRNA binding proteins, it binds directly to 16S rRNA where it nucleates assembly of the body of the 30S subunit.</text>
</comment>
<comment type="function">
    <text evidence="1">With S5 and S12 plays an important role in translational accuracy.</text>
</comment>
<comment type="subunit">
    <text evidence="1">Part of the 30S ribosomal subunit. Contacts protein S5. The interaction surface between S4 and S5 is involved in control of translational fidelity.</text>
</comment>
<comment type="similarity">
    <text evidence="1">Belongs to the universal ribosomal protein uS4 family.</text>
</comment>
<proteinExistence type="inferred from homology"/>
<gene>
    <name evidence="1" type="primary">rpsD1</name>
    <name type="ordered locus">CLB_3509</name>
</gene>
<protein>
    <recommendedName>
        <fullName evidence="1">Small ribosomal subunit protein uS4A</fullName>
    </recommendedName>
    <alternativeName>
        <fullName evidence="2">30S ribosomal protein S4 1</fullName>
    </alternativeName>
</protein>
<name>RS4A_CLOB1</name>
<sequence>MARYTGATCRLCRREGLKLFLKGDRCYTDKCAFARRGYAPGQHGQSRKKVSNYGLQLREKQKAKRIYGILERQFRGYYEEADRRRGITGENLLRLLEMRLDNVVYRLGYGNSRTEARQLVTHGHFLVNGKKVDIPSYQVSANDVITVCDKSKATEKFKTFAENPKTLPAWLSGNVEGFEGKVERQPAREDIDVPVNETLIVELYSK</sequence>
<reference key="1">
    <citation type="journal article" date="2007" name="PLoS ONE">
        <title>Analysis of the neurotoxin complex genes in Clostridium botulinum A1-A4 and B1 strains: BoNT/A3, /Ba4 and /B1 clusters are located within plasmids.</title>
        <authorList>
            <person name="Smith T.J."/>
            <person name="Hill K.K."/>
            <person name="Foley B.T."/>
            <person name="Detter J.C."/>
            <person name="Munk A.C."/>
            <person name="Bruce D.C."/>
            <person name="Doggett N.A."/>
            <person name="Smith L.A."/>
            <person name="Marks J.D."/>
            <person name="Xie G."/>
            <person name="Brettin T.S."/>
        </authorList>
    </citation>
    <scope>NUCLEOTIDE SEQUENCE [LARGE SCALE GENOMIC DNA]</scope>
    <source>
        <strain>ATCC 19397 / Type A</strain>
    </source>
</reference>
<feature type="chain" id="PRO_0000322287" description="Small ribosomal subunit protein uS4A">
    <location>
        <begin position="1"/>
        <end position="206"/>
    </location>
</feature>
<feature type="domain" description="S4 RNA-binding" evidence="1">
    <location>
        <begin position="98"/>
        <end position="164"/>
    </location>
</feature>
<organism>
    <name type="scientific">Clostridium botulinum (strain ATCC 19397 / Type A)</name>
    <dbReference type="NCBI Taxonomy" id="441770"/>
    <lineage>
        <taxon>Bacteria</taxon>
        <taxon>Bacillati</taxon>
        <taxon>Bacillota</taxon>
        <taxon>Clostridia</taxon>
        <taxon>Eubacteriales</taxon>
        <taxon>Clostridiaceae</taxon>
        <taxon>Clostridium</taxon>
    </lineage>
</organism>
<accession>A7FZ45</accession>
<keyword id="KW-0687">Ribonucleoprotein</keyword>
<keyword id="KW-0689">Ribosomal protein</keyword>
<keyword id="KW-0694">RNA-binding</keyword>
<keyword id="KW-0699">rRNA-binding</keyword>
<evidence type="ECO:0000255" key="1">
    <source>
        <dbReference type="HAMAP-Rule" id="MF_01306"/>
    </source>
</evidence>
<evidence type="ECO:0000305" key="2"/>